<keyword id="KW-0012">Acyltransferase</keyword>
<keyword id="KW-0028">Amino-acid biosynthesis</keyword>
<keyword id="KW-0963">Cytoplasm</keyword>
<keyword id="KW-0486">Methionine biosynthesis</keyword>
<keyword id="KW-1185">Reference proteome</keyword>
<keyword id="KW-0808">Transferase</keyword>
<name>METAS_SHEPA</name>
<dbReference type="EC" id="2.3.1.46" evidence="1"/>
<dbReference type="EMBL" id="CP000851">
    <property type="protein sequence ID" value="ABV88104.1"/>
    <property type="molecule type" value="Genomic_DNA"/>
</dbReference>
<dbReference type="RefSeq" id="WP_012156010.1">
    <property type="nucleotide sequence ID" value="NC_009901.1"/>
</dbReference>
<dbReference type="SMR" id="A8H6B7"/>
<dbReference type="STRING" id="398579.Spea_2784"/>
<dbReference type="KEGG" id="spl:Spea_2784"/>
<dbReference type="eggNOG" id="COG1897">
    <property type="taxonomic scope" value="Bacteria"/>
</dbReference>
<dbReference type="HOGENOM" id="CLU_057851_0_1_6"/>
<dbReference type="OrthoDB" id="9772423at2"/>
<dbReference type="UniPathway" id="UPA00051">
    <property type="reaction ID" value="UER00075"/>
</dbReference>
<dbReference type="Proteomes" id="UP000002608">
    <property type="component" value="Chromosome"/>
</dbReference>
<dbReference type="GO" id="GO:0005737">
    <property type="term" value="C:cytoplasm"/>
    <property type="evidence" value="ECO:0007669"/>
    <property type="project" value="UniProtKB-SubCell"/>
</dbReference>
<dbReference type="GO" id="GO:0004414">
    <property type="term" value="F:homoserine O-acetyltransferase activity"/>
    <property type="evidence" value="ECO:0007669"/>
    <property type="project" value="UniProtKB-UniRule"/>
</dbReference>
<dbReference type="GO" id="GO:0008899">
    <property type="term" value="F:homoserine O-succinyltransferase activity"/>
    <property type="evidence" value="ECO:0007669"/>
    <property type="project" value="UniProtKB-EC"/>
</dbReference>
<dbReference type="GO" id="GO:0019281">
    <property type="term" value="P:L-methionine biosynthetic process from homoserine via O-succinyl-L-homoserine and cystathionine"/>
    <property type="evidence" value="ECO:0007669"/>
    <property type="project" value="InterPro"/>
</dbReference>
<dbReference type="CDD" id="cd03131">
    <property type="entry name" value="GATase1_HTS"/>
    <property type="match status" value="1"/>
</dbReference>
<dbReference type="FunFam" id="3.40.50.880:FF:000004">
    <property type="entry name" value="Homoserine O-succinyltransferase"/>
    <property type="match status" value="1"/>
</dbReference>
<dbReference type="Gene3D" id="3.40.50.880">
    <property type="match status" value="1"/>
</dbReference>
<dbReference type="HAMAP" id="MF_00295">
    <property type="entry name" value="MetA_acyltransf"/>
    <property type="match status" value="1"/>
</dbReference>
<dbReference type="InterPro" id="IPR029062">
    <property type="entry name" value="Class_I_gatase-like"/>
</dbReference>
<dbReference type="InterPro" id="IPR005697">
    <property type="entry name" value="HST_MetA"/>
</dbReference>
<dbReference type="InterPro" id="IPR033752">
    <property type="entry name" value="MetA_family"/>
</dbReference>
<dbReference type="NCBIfam" id="TIGR01001">
    <property type="entry name" value="metA"/>
    <property type="match status" value="1"/>
</dbReference>
<dbReference type="PANTHER" id="PTHR20919">
    <property type="entry name" value="HOMOSERINE O-SUCCINYLTRANSFERASE"/>
    <property type="match status" value="1"/>
</dbReference>
<dbReference type="PANTHER" id="PTHR20919:SF0">
    <property type="entry name" value="HOMOSERINE O-SUCCINYLTRANSFERASE"/>
    <property type="match status" value="1"/>
</dbReference>
<dbReference type="Pfam" id="PF04204">
    <property type="entry name" value="HTS"/>
    <property type="match status" value="1"/>
</dbReference>
<dbReference type="PIRSF" id="PIRSF000450">
    <property type="entry name" value="H_ser_succinyltr"/>
    <property type="match status" value="1"/>
</dbReference>
<dbReference type="SUPFAM" id="SSF52317">
    <property type="entry name" value="Class I glutamine amidotransferase-like"/>
    <property type="match status" value="1"/>
</dbReference>
<protein>
    <recommendedName>
        <fullName evidence="1">Homoserine O-succinyltransferase</fullName>
        <shortName evidence="1">HST</shortName>
        <ecNumber evidence="1">2.3.1.46</ecNumber>
    </recommendedName>
    <alternativeName>
        <fullName evidence="1">Homoserine transsuccinylase</fullName>
        <shortName evidence="1">HTS</shortName>
    </alternativeName>
</protein>
<proteinExistence type="inferred from homology"/>
<reference key="1">
    <citation type="submission" date="2007-10" db="EMBL/GenBank/DDBJ databases">
        <title>Complete sequence of Shewanella pealeana ATCC 700345.</title>
        <authorList>
            <consortium name="US DOE Joint Genome Institute"/>
            <person name="Copeland A."/>
            <person name="Lucas S."/>
            <person name="Lapidus A."/>
            <person name="Barry K."/>
            <person name="Glavina del Rio T."/>
            <person name="Dalin E."/>
            <person name="Tice H."/>
            <person name="Pitluck S."/>
            <person name="Chertkov O."/>
            <person name="Brettin T."/>
            <person name="Bruce D."/>
            <person name="Detter J.C."/>
            <person name="Han C."/>
            <person name="Schmutz J."/>
            <person name="Larimer F."/>
            <person name="Land M."/>
            <person name="Hauser L."/>
            <person name="Kyrpides N."/>
            <person name="Kim E."/>
            <person name="Zhao J.-S.Z."/>
            <person name="Manno D."/>
            <person name="Hawari J."/>
            <person name="Richardson P."/>
        </authorList>
    </citation>
    <scope>NUCLEOTIDE SEQUENCE [LARGE SCALE GENOMIC DNA]</scope>
    <source>
        <strain>ATCC 700345 / ANG-SQ1</strain>
    </source>
</reference>
<evidence type="ECO:0000255" key="1">
    <source>
        <dbReference type="HAMAP-Rule" id="MF_00295"/>
    </source>
</evidence>
<organism>
    <name type="scientific">Shewanella pealeana (strain ATCC 700345 / ANG-SQ1)</name>
    <dbReference type="NCBI Taxonomy" id="398579"/>
    <lineage>
        <taxon>Bacteria</taxon>
        <taxon>Pseudomonadati</taxon>
        <taxon>Pseudomonadota</taxon>
        <taxon>Gammaproteobacteria</taxon>
        <taxon>Alteromonadales</taxon>
        <taxon>Shewanellaceae</taxon>
        <taxon>Shewanella</taxon>
    </lineage>
</organism>
<sequence>MPVKIPDDLPAAEILESENIFVMSETRAANQDIRPMKVLILNLMPNKIETETQLLRLLGNTPLQVDVDLLRIHDKASKHTSIDHMNNFYRDFEQIRQKNYDGLIITGAPLGKIEFDEVSYWDHIREIIDWSQQHVTSVLFLCWAAHAALYHLFGLNRSLLEIKRAGVFSHKRTSVHYPLLRGFDDEFFAPHSRFAEMDIEKLRAHPELEVLTESDEAGAYMVLSKNNRNLFVMGHPEYQKSTLKDEYNRDIAQGLTPELPKNYFKNDDPDQEPISRWHSHGSLLVSNWLNYYVYQLTPYNLDDMTGITPWESKD</sequence>
<feature type="chain" id="PRO_1000078938" description="Homoserine O-succinyltransferase">
    <location>
        <begin position="1"/>
        <end position="314"/>
    </location>
</feature>
<feature type="active site" description="Acyl-thioester intermediate" evidence="1">
    <location>
        <position position="142"/>
    </location>
</feature>
<feature type="active site" description="Proton acceptor" evidence="1">
    <location>
        <position position="235"/>
    </location>
</feature>
<feature type="active site" evidence="1">
    <location>
        <position position="237"/>
    </location>
</feature>
<feature type="binding site" evidence="1">
    <location>
        <position position="163"/>
    </location>
    <ligand>
        <name>substrate</name>
    </ligand>
</feature>
<feature type="binding site" evidence="1">
    <location>
        <position position="192"/>
    </location>
    <ligand>
        <name>substrate</name>
    </ligand>
</feature>
<feature type="binding site" evidence="1">
    <location>
        <position position="249"/>
    </location>
    <ligand>
        <name>substrate</name>
    </ligand>
</feature>
<feature type="site" description="Important for acyl-CoA specificity" evidence="1">
    <location>
        <position position="111"/>
    </location>
</feature>
<feature type="site" description="Important for substrate specificity" evidence="1">
    <location>
        <position position="192"/>
    </location>
</feature>
<gene>
    <name evidence="1" type="primary">metAS</name>
    <name type="ordered locus">Spea_2784</name>
</gene>
<accession>A8H6B7</accession>
<comment type="function">
    <text evidence="1">Transfers a succinyl group from succinyl-CoA to L-homoserine, forming succinyl-L-homoserine.</text>
</comment>
<comment type="catalytic activity">
    <reaction evidence="1">
        <text>L-homoserine + succinyl-CoA = O-succinyl-L-homoserine + CoA</text>
        <dbReference type="Rhea" id="RHEA:22008"/>
        <dbReference type="ChEBI" id="CHEBI:57287"/>
        <dbReference type="ChEBI" id="CHEBI:57292"/>
        <dbReference type="ChEBI" id="CHEBI:57476"/>
        <dbReference type="ChEBI" id="CHEBI:57661"/>
        <dbReference type="EC" id="2.3.1.46"/>
    </reaction>
</comment>
<comment type="pathway">
    <text evidence="1">Amino-acid biosynthesis; L-methionine biosynthesis via de novo pathway; O-succinyl-L-homoserine from L-homoserine: step 1/1.</text>
</comment>
<comment type="subcellular location">
    <subcellularLocation>
        <location evidence="1">Cytoplasm</location>
    </subcellularLocation>
</comment>
<comment type="similarity">
    <text evidence="1">Belongs to the MetA family.</text>
</comment>